<name>CIDB_STAES</name>
<reference key="1">
    <citation type="journal article" date="2003" name="Mol. Microbiol.">
        <title>Genome-based analysis of virulence genes in a non-biofilm-forming Staphylococcus epidermidis strain (ATCC 12228).</title>
        <authorList>
            <person name="Zhang Y.-Q."/>
            <person name="Ren S.-X."/>
            <person name="Li H.-L."/>
            <person name="Wang Y.-X."/>
            <person name="Fu G."/>
            <person name="Yang J."/>
            <person name="Qin Z.-Q."/>
            <person name="Miao Y.-G."/>
            <person name="Wang W.-Y."/>
            <person name="Chen R.-S."/>
            <person name="Shen Y."/>
            <person name="Chen Z."/>
            <person name="Yuan Z.-H."/>
            <person name="Zhao G.-P."/>
            <person name="Qu D."/>
            <person name="Danchin A."/>
            <person name="Wen Y.-M."/>
        </authorList>
    </citation>
    <scope>NUCLEOTIDE SEQUENCE [LARGE SCALE GENOMIC DNA]</scope>
    <source>
        <strain>ATCC 12228 / FDA PCI 1200</strain>
    </source>
</reference>
<comment type="function">
    <text evidence="1">Increases the activity of extracellular murein hydrolases possibly by mediating their export via hole formation. Inhibited by the antiholin-like proteins LrgAB. In an unstressed cell, the LrgAB products probably inhibit the function of the CidAB proteins. When a cell is stressed by the addition of antibiotics or by other factors in the environment, the CidAB proteins possibly oligomerize within the bacterial cell membrane, creating lesions that disrupt the proton motive force, which in turn results in loss of cell viability. These lesions are also hypothesized to regulate the subsequent cell lysis by either allowing the murein hydrolases access to the cell wall substrate and/or regulating their activity by a possible change in the cell wall pH that results from loss of membrane potential (By similarity).</text>
</comment>
<comment type="subcellular location">
    <subcellularLocation>
        <location evidence="3">Cell membrane</location>
        <topology evidence="3">Multi-pass membrane protein</topology>
    </subcellularLocation>
</comment>
<comment type="similarity">
    <text evidence="3">Belongs to the CidB/LrgB family. CidB subfamily.</text>
</comment>
<feature type="chain" id="PRO_0000217051" description="Holin-like protein CidB">
    <location>
        <begin position="1"/>
        <end position="229"/>
    </location>
</feature>
<feature type="transmembrane region" description="Helical" evidence="2">
    <location>
        <begin position="4"/>
        <end position="21"/>
    </location>
</feature>
<feature type="transmembrane region" description="Helical" evidence="2">
    <location>
        <begin position="30"/>
        <end position="52"/>
    </location>
</feature>
<feature type="transmembrane region" description="Helical" evidence="2">
    <location>
        <begin position="62"/>
        <end position="80"/>
    </location>
</feature>
<feature type="transmembrane region" description="Helical" evidence="2">
    <location>
        <begin position="89"/>
        <end position="111"/>
    </location>
</feature>
<feature type="transmembrane region" description="Helical" evidence="2">
    <location>
        <begin position="147"/>
        <end position="169"/>
    </location>
</feature>
<feature type="transmembrane region" description="Helical" evidence="2">
    <location>
        <begin position="204"/>
        <end position="226"/>
    </location>
</feature>
<proteinExistence type="inferred from homology"/>
<dbReference type="EMBL" id="AE015929">
    <property type="protein sequence ID" value="AAO05746.1"/>
    <property type="molecule type" value="Genomic_DNA"/>
</dbReference>
<dbReference type="RefSeq" id="NP_765659.1">
    <property type="nucleotide sequence ID" value="NC_004461.1"/>
</dbReference>
<dbReference type="RefSeq" id="WP_001832367.1">
    <property type="nucleotide sequence ID" value="NZ_WBME01000013.1"/>
</dbReference>
<dbReference type="KEGG" id="sep:SE_2104"/>
<dbReference type="PATRIC" id="fig|176280.10.peg.2055"/>
<dbReference type="eggNOG" id="COG1346">
    <property type="taxonomic scope" value="Bacteria"/>
</dbReference>
<dbReference type="HOGENOM" id="CLU_082099_1_0_9"/>
<dbReference type="OrthoDB" id="9811701at2"/>
<dbReference type="Proteomes" id="UP000001411">
    <property type="component" value="Chromosome"/>
</dbReference>
<dbReference type="GO" id="GO:0005886">
    <property type="term" value="C:plasma membrane"/>
    <property type="evidence" value="ECO:0007669"/>
    <property type="project" value="UniProtKB-SubCell"/>
</dbReference>
<dbReference type="GO" id="GO:0031640">
    <property type="term" value="P:killing of cells of another organism"/>
    <property type="evidence" value="ECO:0007669"/>
    <property type="project" value="UniProtKB-KW"/>
</dbReference>
<dbReference type="InterPro" id="IPR007300">
    <property type="entry name" value="CidB/LrgB"/>
</dbReference>
<dbReference type="PANTHER" id="PTHR30249:SF17">
    <property type="entry name" value="HOLIN-LIKE PROTEIN CIDB"/>
    <property type="match status" value="1"/>
</dbReference>
<dbReference type="PANTHER" id="PTHR30249">
    <property type="entry name" value="PUTATIVE SEROTONIN TRANSPORTER"/>
    <property type="match status" value="1"/>
</dbReference>
<dbReference type="Pfam" id="PF04172">
    <property type="entry name" value="LrgB"/>
    <property type="match status" value="1"/>
</dbReference>
<protein>
    <recommendedName>
        <fullName>Holin-like protein CidB</fullName>
    </recommendedName>
</protein>
<evidence type="ECO:0000250" key="1"/>
<evidence type="ECO:0000255" key="2"/>
<evidence type="ECO:0000305" key="3"/>
<keyword id="KW-1003">Cell membrane</keyword>
<keyword id="KW-0204">Cytolysis</keyword>
<keyword id="KW-0472">Membrane</keyword>
<keyword id="KW-0812">Transmembrane</keyword>
<keyword id="KW-1133">Transmembrane helix</keyword>
<sequence>MNEYLQAVLMILLTIVLYYVSKKIQDKYNNPLLNPALIASIAIIIVLLVCGVSYKGYMKGGTWINHVLNATVVCLAYPLYQNKKKIKKYLTIIFTSVLTGVVLNFVLVFTTLKIFGYSKDTIVTLLPRSITAAVGIEVSQELGGTDTITVLFIITTGLIGSILGSMLLRMGGFKSSIARGLTYGNASHAFGTAKALELDIESGAFSSIGMILTAVISSVLIPVLILLFY</sequence>
<accession>Q8CR39</accession>
<gene>
    <name type="primary">cidB</name>
    <name type="ordered locus">SE_2104</name>
</gene>
<organism>
    <name type="scientific">Staphylococcus epidermidis (strain ATCC 12228 / FDA PCI 1200)</name>
    <dbReference type="NCBI Taxonomy" id="176280"/>
    <lineage>
        <taxon>Bacteria</taxon>
        <taxon>Bacillati</taxon>
        <taxon>Bacillota</taxon>
        <taxon>Bacilli</taxon>
        <taxon>Bacillales</taxon>
        <taxon>Staphylococcaceae</taxon>
        <taxon>Staphylococcus</taxon>
    </lineage>
</organism>